<keyword id="KW-0143">Chaperone</keyword>
<keyword id="KW-0963">Cytoplasm</keyword>
<keyword id="KW-0996">Nickel insertion</keyword>
<keyword id="KW-1185">Reference proteome</keyword>
<dbReference type="EMBL" id="CP000250">
    <property type="protein sequence ID" value="ABD06507.1"/>
    <property type="molecule type" value="Genomic_DNA"/>
</dbReference>
<dbReference type="RefSeq" id="WP_011440695.1">
    <property type="nucleotide sequence ID" value="NC_007778.1"/>
</dbReference>
<dbReference type="SMR" id="Q2IZ53"/>
<dbReference type="STRING" id="316058.RPB_1799"/>
<dbReference type="KEGG" id="rpb:RPB_1799"/>
<dbReference type="eggNOG" id="COG0829">
    <property type="taxonomic scope" value="Bacteria"/>
</dbReference>
<dbReference type="HOGENOM" id="CLU_056339_2_0_5"/>
<dbReference type="Proteomes" id="UP000008809">
    <property type="component" value="Chromosome"/>
</dbReference>
<dbReference type="GO" id="GO:0005737">
    <property type="term" value="C:cytoplasm"/>
    <property type="evidence" value="ECO:0007669"/>
    <property type="project" value="UniProtKB-SubCell"/>
</dbReference>
<dbReference type="GO" id="GO:0016151">
    <property type="term" value="F:nickel cation binding"/>
    <property type="evidence" value="ECO:0007669"/>
    <property type="project" value="UniProtKB-UniRule"/>
</dbReference>
<dbReference type="HAMAP" id="MF_01384">
    <property type="entry name" value="UreD"/>
    <property type="match status" value="1"/>
</dbReference>
<dbReference type="InterPro" id="IPR002669">
    <property type="entry name" value="UreD"/>
</dbReference>
<dbReference type="PANTHER" id="PTHR33643">
    <property type="entry name" value="UREASE ACCESSORY PROTEIN D"/>
    <property type="match status" value="1"/>
</dbReference>
<dbReference type="PANTHER" id="PTHR33643:SF1">
    <property type="entry name" value="UREASE ACCESSORY PROTEIN D"/>
    <property type="match status" value="1"/>
</dbReference>
<dbReference type="Pfam" id="PF01774">
    <property type="entry name" value="UreD"/>
    <property type="match status" value="1"/>
</dbReference>
<protein>
    <recommendedName>
        <fullName evidence="1">Urease accessory protein UreD</fullName>
    </recommendedName>
</protein>
<comment type="function">
    <text evidence="1">Required for maturation of urease via the functional incorporation of the urease nickel metallocenter.</text>
</comment>
<comment type="subunit">
    <text evidence="1">UreD, UreF and UreG form a complex that acts as a GTP-hydrolysis-dependent molecular chaperone, activating the urease apoprotein by helping to assemble the nickel containing metallocenter of UreC. The UreE protein probably delivers the nickel.</text>
</comment>
<comment type="subcellular location">
    <subcellularLocation>
        <location evidence="1">Cytoplasm</location>
    </subcellularLocation>
</comment>
<comment type="similarity">
    <text evidence="1">Belongs to the UreD family.</text>
</comment>
<reference key="1">
    <citation type="submission" date="2006-01" db="EMBL/GenBank/DDBJ databases">
        <title>Complete sequence of Rhodopseudomonas palustris HaA2.</title>
        <authorList>
            <consortium name="US DOE Joint Genome Institute"/>
            <person name="Copeland A."/>
            <person name="Lucas S."/>
            <person name="Lapidus A."/>
            <person name="Barry K."/>
            <person name="Detter J.C."/>
            <person name="Glavina T."/>
            <person name="Hammon N."/>
            <person name="Israni S."/>
            <person name="Pitluck S."/>
            <person name="Chain P."/>
            <person name="Malfatti S."/>
            <person name="Shin M."/>
            <person name="Vergez L."/>
            <person name="Schmutz J."/>
            <person name="Larimer F."/>
            <person name="Land M."/>
            <person name="Hauser L."/>
            <person name="Pelletier D.A."/>
            <person name="Kyrpides N."/>
            <person name="Anderson I."/>
            <person name="Oda Y."/>
            <person name="Harwood C.S."/>
            <person name="Richardson P."/>
        </authorList>
    </citation>
    <scope>NUCLEOTIDE SEQUENCE [LARGE SCALE GENOMIC DNA]</scope>
    <source>
        <strain>HaA2</strain>
    </source>
</reference>
<accession>Q2IZ53</accession>
<name>URED_RHOP2</name>
<sequence length="279" mass="29313">MIQAETSAADSAVFAGNRAQGAVRFDVRAVDGVTRRGQLHESGSLRVRFPSPEQQGLSAVLVNTAGGIAGGDRFGVDIAVGESARLTLTTAAAEKIYRSHGPAAQLDIALQVAEGGHLAWLPQETILFDQARVERRIDIDLAAGASLLLCESVIFGRSAMGETMRSGRFTDRWRLRIGGKLVFAETVRLDGDIGALLGRPAVAKGGVAIGTALIAPGDAALVARLREDADGFGAEVGITAWNGIAMARFCAQDAAKLRADMMAVLRRAAGRALPRLWLG</sequence>
<feature type="chain" id="PRO_0000340513" description="Urease accessory protein UreD">
    <location>
        <begin position="1"/>
        <end position="279"/>
    </location>
</feature>
<organism>
    <name type="scientific">Rhodopseudomonas palustris (strain HaA2)</name>
    <dbReference type="NCBI Taxonomy" id="316058"/>
    <lineage>
        <taxon>Bacteria</taxon>
        <taxon>Pseudomonadati</taxon>
        <taxon>Pseudomonadota</taxon>
        <taxon>Alphaproteobacteria</taxon>
        <taxon>Hyphomicrobiales</taxon>
        <taxon>Nitrobacteraceae</taxon>
        <taxon>Rhodopseudomonas</taxon>
    </lineage>
</organism>
<gene>
    <name evidence="1" type="primary">ureD</name>
    <name type="ordered locus">RPB_1799</name>
</gene>
<proteinExistence type="inferred from homology"/>
<evidence type="ECO:0000255" key="1">
    <source>
        <dbReference type="HAMAP-Rule" id="MF_01384"/>
    </source>
</evidence>